<name>GMHA_PELPD</name>
<proteinExistence type="inferred from homology"/>
<sequence>MLDDITTQLKSRRALFELIARDMPPLMADMAAQLVEAFRKGNKLLVMGNGGSAADAQHLAAEIVGRFKMERRALPAISLSTDSSILTALGNDYGFDAVFRRQVEALAQAGDVVLGISTSGNSPNVRSALQLARERGCRTMGLLGRDGGSIRSLCDLALVVPSLDTPTIQEGHITIIHIVCDLVEKALFA</sequence>
<comment type="function">
    <text evidence="1">Catalyzes the isomerization of sedoheptulose 7-phosphate in D-glycero-D-manno-heptose 7-phosphate.</text>
</comment>
<comment type="catalytic activity">
    <reaction evidence="1">
        <text>2 D-sedoheptulose 7-phosphate = D-glycero-alpha-D-manno-heptose 7-phosphate + D-glycero-beta-D-manno-heptose 7-phosphate</text>
        <dbReference type="Rhea" id="RHEA:27489"/>
        <dbReference type="ChEBI" id="CHEBI:57483"/>
        <dbReference type="ChEBI" id="CHEBI:60203"/>
        <dbReference type="ChEBI" id="CHEBI:60204"/>
        <dbReference type="EC" id="5.3.1.28"/>
    </reaction>
</comment>
<comment type="cofactor">
    <cofactor evidence="1">
        <name>Zn(2+)</name>
        <dbReference type="ChEBI" id="CHEBI:29105"/>
    </cofactor>
    <text evidence="1">Binds 1 zinc ion per subunit.</text>
</comment>
<comment type="pathway">
    <text evidence="1">Carbohydrate biosynthesis; D-glycero-D-manno-heptose 7-phosphate biosynthesis; D-glycero-alpha-D-manno-heptose 7-phosphate and D-glycero-beta-D-manno-heptose 7-phosphate from sedoheptulose 7-phosphate: step 1/1.</text>
</comment>
<comment type="subunit">
    <text evidence="1">Homotetramer.</text>
</comment>
<comment type="subcellular location">
    <subcellularLocation>
        <location evidence="1">Cytoplasm</location>
    </subcellularLocation>
</comment>
<comment type="miscellaneous">
    <text evidence="1">The reaction produces a racemic mixture of D-glycero-alpha-D-manno-heptose 7-phosphate and D-glycero-beta-D-manno-heptose 7-phosphate.</text>
</comment>
<comment type="similarity">
    <text evidence="1">Belongs to the SIS family. GmhA subfamily.</text>
</comment>
<accession>A1AV13</accession>
<feature type="chain" id="PRO_1000009085" description="Phosphoheptose isomerase">
    <location>
        <begin position="1"/>
        <end position="189"/>
    </location>
</feature>
<feature type="domain" description="SIS" evidence="1">
    <location>
        <begin position="34"/>
        <end position="189"/>
    </location>
</feature>
<feature type="binding site" evidence="1">
    <location>
        <begin position="49"/>
        <end position="51"/>
    </location>
    <ligand>
        <name>substrate</name>
    </ligand>
</feature>
<feature type="binding site" evidence="1">
    <location>
        <position position="58"/>
    </location>
    <ligand>
        <name>Zn(2+)</name>
        <dbReference type="ChEBI" id="CHEBI:29105"/>
    </ligand>
</feature>
<feature type="binding site" evidence="1">
    <location>
        <position position="62"/>
    </location>
    <ligand>
        <name>substrate</name>
    </ligand>
</feature>
<feature type="binding site" evidence="1">
    <location>
        <position position="62"/>
    </location>
    <ligand>
        <name>Zn(2+)</name>
        <dbReference type="ChEBI" id="CHEBI:29105"/>
    </ligand>
</feature>
<feature type="binding site" evidence="1">
    <location>
        <begin position="91"/>
        <end position="92"/>
    </location>
    <ligand>
        <name>substrate</name>
    </ligand>
</feature>
<feature type="binding site" evidence="1">
    <location>
        <begin position="117"/>
        <end position="119"/>
    </location>
    <ligand>
        <name>substrate</name>
    </ligand>
</feature>
<feature type="binding site" evidence="1">
    <location>
        <position position="122"/>
    </location>
    <ligand>
        <name>substrate</name>
    </ligand>
</feature>
<feature type="binding site" evidence="1">
    <location>
        <position position="169"/>
    </location>
    <ligand>
        <name>substrate</name>
    </ligand>
</feature>
<feature type="binding site" evidence="1">
    <location>
        <position position="169"/>
    </location>
    <ligand>
        <name>Zn(2+)</name>
        <dbReference type="ChEBI" id="CHEBI:29105"/>
    </ligand>
</feature>
<feature type="binding site" evidence="1">
    <location>
        <position position="177"/>
    </location>
    <ligand>
        <name>Zn(2+)</name>
        <dbReference type="ChEBI" id="CHEBI:29105"/>
    </ligand>
</feature>
<protein>
    <recommendedName>
        <fullName evidence="1">Phosphoheptose isomerase</fullName>
        <ecNumber evidence="1">5.3.1.28</ecNumber>
    </recommendedName>
    <alternativeName>
        <fullName evidence="1">Sedoheptulose 7-phosphate isomerase</fullName>
    </alternativeName>
</protein>
<evidence type="ECO:0000255" key="1">
    <source>
        <dbReference type="HAMAP-Rule" id="MF_00067"/>
    </source>
</evidence>
<gene>
    <name evidence="1" type="primary">gmhA</name>
    <name type="ordered locus">Ppro_3592</name>
</gene>
<reference key="1">
    <citation type="submission" date="2006-10" db="EMBL/GenBank/DDBJ databases">
        <title>Complete sequence of chromosome of Pelobacter propionicus DSM 2379.</title>
        <authorList>
            <consortium name="US DOE Joint Genome Institute"/>
            <person name="Copeland A."/>
            <person name="Lucas S."/>
            <person name="Lapidus A."/>
            <person name="Barry K."/>
            <person name="Detter J.C."/>
            <person name="Glavina del Rio T."/>
            <person name="Hammon N."/>
            <person name="Israni S."/>
            <person name="Dalin E."/>
            <person name="Tice H."/>
            <person name="Pitluck S."/>
            <person name="Saunders E."/>
            <person name="Brettin T."/>
            <person name="Bruce D."/>
            <person name="Han C."/>
            <person name="Tapia R."/>
            <person name="Schmutz J."/>
            <person name="Larimer F."/>
            <person name="Land M."/>
            <person name="Hauser L."/>
            <person name="Kyrpides N."/>
            <person name="Kim E."/>
            <person name="Lovley D."/>
            <person name="Richardson P."/>
        </authorList>
    </citation>
    <scope>NUCLEOTIDE SEQUENCE [LARGE SCALE GENOMIC DNA]</scope>
    <source>
        <strain>DSM 2379 / NBRC 103807 / OttBd1</strain>
    </source>
</reference>
<organism>
    <name type="scientific">Pelobacter propionicus (strain DSM 2379 / NBRC 103807 / OttBd1)</name>
    <dbReference type="NCBI Taxonomy" id="338966"/>
    <lineage>
        <taxon>Bacteria</taxon>
        <taxon>Pseudomonadati</taxon>
        <taxon>Thermodesulfobacteriota</taxon>
        <taxon>Desulfuromonadia</taxon>
        <taxon>Desulfuromonadales</taxon>
        <taxon>Desulfuromonadaceae</taxon>
        <taxon>Pelobacter</taxon>
    </lineage>
</organism>
<dbReference type="EC" id="5.3.1.28" evidence="1"/>
<dbReference type="EMBL" id="CP000482">
    <property type="protein sequence ID" value="ABL01184.1"/>
    <property type="molecule type" value="Genomic_DNA"/>
</dbReference>
<dbReference type="RefSeq" id="WP_011737397.1">
    <property type="nucleotide sequence ID" value="NC_008609.1"/>
</dbReference>
<dbReference type="SMR" id="A1AV13"/>
<dbReference type="STRING" id="338966.Ppro_3592"/>
<dbReference type="KEGG" id="ppd:Ppro_3592"/>
<dbReference type="eggNOG" id="COG0279">
    <property type="taxonomic scope" value="Bacteria"/>
</dbReference>
<dbReference type="HOGENOM" id="CLU_080999_0_1_7"/>
<dbReference type="OrthoDB" id="9810929at2"/>
<dbReference type="UniPathway" id="UPA00041">
    <property type="reaction ID" value="UER00436"/>
</dbReference>
<dbReference type="Proteomes" id="UP000006732">
    <property type="component" value="Chromosome"/>
</dbReference>
<dbReference type="GO" id="GO:0005737">
    <property type="term" value="C:cytoplasm"/>
    <property type="evidence" value="ECO:0007669"/>
    <property type="project" value="UniProtKB-SubCell"/>
</dbReference>
<dbReference type="GO" id="GO:0097367">
    <property type="term" value="F:carbohydrate derivative binding"/>
    <property type="evidence" value="ECO:0007669"/>
    <property type="project" value="InterPro"/>
</dbReference>
<dbReference type="GO" id="GO:0008968">
    <property type="term" value="F:D-sedoheptulose 7-phosphate isomerase activity"/>
    <property type="evidence" value="ECO:0007669"/>
    <property type="project" value="UniProtKB-UniRule"/>
</dbReference>
<dbReference type="GO" id="GO:0008270">
    <property type="term" value="F:zinc ion binding"/>
    <property type="evidence" value="ECO:0007669"/>
    <property type="project" value="UniProtKB-UniRule"/>
</dbReference>
<dbReference type="GO" id="GO:0005975">
    <property type="term" value="P:carbohydrate metabolic process"/>
    <property type="evidence" value="ECO:0007669"/>
    <property type="project" value="UniProtKB-UniRule"/>
</dbReference>
<dbReference type="GO" id="GO:2001061">
    <property type="term" value="P:D-glycero-D-manno-heptose 7-phosphate biosynthetic process"/>
    <property type="evidence" value="ECO:0007669"/>
    <property type="project" value="UniProtKB-UniPathway"/>
</dbReference>
<dbReference type="CDD" id="cd05006">
    <property type="entry name" value="SIS_GmhA"/>
    <property type="match status" value="1"/>
</dbReference>
<dbReference type="Gene3D" id="3.40.50.10490">
    <property type="entry name" value="Glucose-6-phosphate isomerase like protein, domain 1"/>
    <property type="match status" value="1"/>
</dbReference>
<dbReference type="HAMAP" id="MF_00067">
    <property type="entry name" value="GmhA"/>
    <property type="match status" value="1"/>
</dbReference>
<dbReference type="InterPro" id="IPR035461">
    <property type="entry name" value="GmhA/DiaA"/>
</dbReference>
<dbReference type="InterPro" id="IPR004515">
    <property type="entry name" value="Phosphoheptose_Isoase"/>
</dbReference>
<dbReference type="InterPro" id="IPR001347">
    <property type="entry name" value="SIS_dom"/>
</dbReference>
<dbReference type="InterPro" id="IPR046348">
    <property type="entry name" value="SIS_dom_sf"/>
</dbReference>
<dbReference type="InterPro" id="IPR050099">
    <property type="entry name" value="SIS_GmhA/DiaA_subfam"/>
</dbReference>
<dbReference type="NCBIfam" id="TIGR00441">
    <property type="entry name" value="gmhA"/>
    <property type="match status" value="1"/>
</dbReference>
<dbReference type="PANTHER" id="PTHR30390:SF6">
    <property type="entry name" value="DNAA INITIATOR-ASSOCIATING PROTEIN DIAA"/>
    <property type="match status" value="1"/>
</dbReference>
<dbReference type="PANTHER" id="PTHR30390">
    <property type="entry name" value="SEDOHEPTULOSE 7-PHOSPHATE ISOMERASE / DNAA INITIATOR-ASSOCIATING FACTOR FOR REPLICATION INITIATION"/>
    <property type="match status" value="1"/>
</dbReference>
<dbReference type="Pfam" id="PF13580">
    <property type="entry name" value="SIS_2"/>
    <property type="match status" value="1"/>
</dbReference>
<dbReference type="SUPFAM" id="SSF53697">
    <property type="entry name" value="SIS domain"/>
    <property type="match status" value="1"/>
</dbReference>
<dbReference type="PROSITE" id="PS51464">
    <property type="entry name" value="SIS"/>
    <property type="match status" value="1"/>
</dbReference>
<keyword id="KW-0119">Carbohydrate metabolism</keyword>
<keyword id="KW-0963">Cytoplasm</keyword>
<keyword id="KW-0413">Isomerase</keyword>
<keyword id="KW-0479">Metal-binding</keyword>
<keyword id="KW-1185">Reference proteome</keyword>
<keyword id="KW-0862">Zinc</keyword>